<feature type="signal peptide" evidence="3">
    <location>
        <begin position="1"/>
        <end position="22"/>
    </location>
</feature>
<feature type="chain" id="PRO_0000343873" description="Platelet-derived growth factor C, latent form">
    <location>
        <begin position="23"/>
        <end position="345"/>
    </location>
</feature>
<feature type="chain" id="PRO_0000343874" description="Platelet-derived growth factor C, receptor-binding form">
    <location>
        <begin status="unknown"/>
        <end position="345"/>
    </location>
</feature>
<feature type="domain" description="CUB" evidence="4">
    <location>
        <begin position="46"/>
        <end position="163"/>
    </location>
</feature>
<feature type="region of interest" description="Disordered" evidence="5">
    <location>
        <begin position="24"/>
        <end position="45"/>
    </location>
</feature>
<feature type="compositionally biased region" description="Polar residues" evidence="5">
    <location>
        <begin position="24"/>
        <end position="33"/>
    </location>
</feature>
<feature type="compositionally biased region" description="Basic and acidic residues" evidence="5">
    <location>
        <begin position="34"/>
        <end position="45"/>
    </location>
</feature>
<feature type="site" description="Cleavage" evidence="1">
    <location>
        <begin position="225"/>
        <end position="226"/>
    </location>
</feature>
<feature type="site" description="Cleavage" evidence="1">
    <location>
        <begin position="231"/>
        <end position="232"/>
    </location>
</feature>
<feature type="site" description="Cleavage" evidence="1">
    <location>
        <begin position="234"/>
        <end position="235"/>
    </location>
</feature>
<feature type="glycosylation site" description="N-linked (GlcNAc...) asparagine" evidence="3">
    <location>
        <position position="25"/>
    </location>
</feature>
<feature type="glycosylation site" description="N-linked (GlcNAc...) asparagine" evidence="3">
    <location>
        <position position="55"/>
    </location>
</feature>
<feature type="disulfide bond" evidence="4">
    <location>
        <begin position="104"/>
        <end position="124"/>
    </location>
</feature>
<feature type="disulfide bond" evidence="4">
    <location>
        <begin position="250"/>
        <end position="294"/>
    </location>
</feature>
<feature type="disulfide bond" description="Interchain (with C-286)" evidence="4">
    <location>
        <position position="274"/>
    </location>
</feature>
<feature type="disulfide bond" evidence="4">
    <location>
        <begin position="280"/>
        <end position="335"/>
    </location>
</feature>
<feature type="disulfide bond" description="Interchain (with C-274)" evidence="4">
    <location>
        <position position="286"/>
    </location>
</feature>
<feature type="disulfide bond" evidence="4">
    <location>
        <begin position="287"/>
        <end position="337"/>
    </location>
</feature>
<feature type="sequence conflict" description="In Ref. 1; AAF91483." evidence="23" ref="1">
    <original>I</original>
    <variation>T</variation>
    <location>
        <position position="86"/>
    </location>
</feature>
<feature type="sequence conflict" description="In Ref. 5; AAH37696." evidence="23" ref="5">
    <original>I</original>
    <variation>L</variation>
    <location>
        <position position="103"/>
    </location>
</feature>
<feature type="sequence conflict" description="In Ref. 1; AAF91483." evidence="23" ref="1">
    <original>G</original>
    <variation>E</variation>
    <location>
        <position position="127"/>
    </location>
</feature>
<feature type="sequence conflict" description="In Ref. 1; AAF91483." evidence="23" ref="1">
    <original>G</original>
    <variation>V</variation>
    <location>
        <position position="230"/>
    </location>
</feature>
<feature type="sequence conflict" description="In Ref. 1; AAF91483." evidence="23" ref="1">
    <original>I</original>
    <variation>R</variation>
    <location>
        <position position="269"/>
    </location>
</feature>
<sequence length="345" mass="38741">MLLLGLLLLTSALAGQRTGTRAESNLSSKLQLSSDKEQNGVQDPRHERVVTISGNGSIHSPKFPHTYPRNMVLVWRLVAVDENVRIQLTFDERFGLEDPEDDICKYDFVEVEEPSDGSVLGRWCGSGTVPGKQTSKGNHIRIRFVSDEYFPSEPGFCIHYSIIMPQVTETTSPSVLPPSSLSLDLLNNAVTAFSTLEELIRYLEPDRWQVDLDSLYKPTWQLLGKAFLYGKKSKVVNLNLLKEEVKLYSCTPRNFSVSIREELKRTDTIFWPGCLLVKRCGGNCACCLHNCNECQCVPRKVTKKYHEVLQLRPKTGVKGLHKSLTDVALEHHEECDCVCRGNAGG</sequence>
<name>PDGFC_MOUSE</name>
<evidence type="ECO:0000250" key="1"/>
<evidence type="ECO:0000250" key="2">
    <source>
        <dbReference type="UniProtKB" id="Q9NRA1"/>
    </source>
</evidence>
<evidence type="ECO:0000255" key="3"/>
<evidence type="ECO:0000255" key="4">
    <source>
        <dbReference type="PROSITE-ProRule" id="PRU00059"/>
    </source>
</evidence>
<evidence type="ECO:0000256" key="5">
    <source>
        <dbReference type="SAM" id="MobiDB-lite"/>
    </source>
</evidence>
<evidence type="ECO:0000269" key="6">
    <source>
    </source>
</evidence>
<evidence type="ECO:0000269" key="7">
    <source>
    </source>
</evidence>
<evidence type="ECO:0000269" key="8">
    <source>
    </source>
</evidence>
<evidence type="ECO:0000269" key="9">
    <source>
    </source>
</evidence>
<evidence type="ECO:0000269" key="10">
    <source>
    </source>
</evidence>
<evidence type="ECO:0000269" key="11">
    <source>
    </source>
</evidence>
<evidence type="ECO:0000269" key="12">
    <source>
    </source>
</evidence>
<evidence type="ECO:0000269" key="13">
    <source>
    </source>
</evidence>
<evidence type="ECO:0000269" key="14">
    <source>
    </source>
</evidence>
<evidence type="ECO:0000269" key="15">
    <source>
    </source>
</evidence>
<evidence type="ECO:0000269" key="16">
    <source>
    </source>
</evidence>
<evidence type="ECO:0000269" key="17">
    <source>
    </source>
</evidence>
<evidence type="ECO:0000269" key="18">
    <source>
    </source>
</evidence>
<evidence type="ECO:0000269" key="19">
    <source>
    </source>
</evidence>
<evidence type="ECO:0000269" key="20">
    <source>
    </source>
</evidence>
<evidence type="ECO:0000269" key="21">
    <source>
    </source>
</evidence>
<evidence type="ECO:0000269" key="22">
    <source>
    </source>
</evidence>
<evidence type="ECO:0000305" key="23"/>
<keyword id="KW-1003">Cell membrane</keyword>
<keyword id="KW-0165">Cleavage on pair of basic residues</keyword>
<keyword id="KW-0963">Cytoplasm</keyword>
<keyword id="KW-0217">Developmental protein</keyword>
<keyword id="KW-1015">Disulfide bond</keyword>
<keyword id="KW-0325">Glycoprotein</keyword>
<keyword id="KW-0339">Growth factor</keyword>
<keyword id="KW-0472">Membrane</keyword>
<keyword id="KW-0497">Mitogen</keyword>
<keyword id="KW-0539">Nucleus</keyword>
<keyword id="KW-1185">Reference proteome</keyword>
<keyword id="KW-0964">Secreted</keyword>
<keyword id="KW-0732">Signal</keyword>
<keyword id="KW-0832">Ubl conjugation</keyword>
<proteinExistence type="evidence at protein level"/>
<comment type="function">
    <text evidence="6 8 11 12 14 15 16 22">Growth factor that plays an essential role in the regulation of embryonic development, cell proliferation, cell migration, survival and chemotaxis. Potent mitogen and chemoattractant for cells of mesenchymal origin. Required for normal skeleton formation during embryonic development, especially for normal development of the craniofacial skeleton and for normal development of the palate. Required for normal skin morphogenesis during embryonic development. Plays an important role in wound healing, where it appears to be involved in three stages: inflammation, proliferation and remodeling. Plays an important role in angiogenesis and blood vessel development. Involved in fibrotic processes, in which transformation of interstitial fibroblasts into myofibroblasts plus collagen deposition occurs. The CUB domain has mitogenic activity in coronary artery smooth muscle cells, suggesting a role beyond the maintenance of the latency of the PDGF domain. In the nucleus, PDGFC seems to have additional function.</text>
</comment>
<comment type="subunit">
    <text evidence="1">Homodimer; disulfide-linked. Interacts with PDGFRA homodimers, and with heterodimers formed by PDGFRA and PDGFRB. Interacts (via CUB domain) with PLAT (via kringle domain) (By similarity).</text>
</comment>
<comment type="subcellular location">
    <subcellularLocation>
        <location evidence="19">Cytoplasm</location>
        <location evidence="19">Cytosol</location>
    </subcellularLocation>
    <subcellularLocation>
        <location evidence="15">Secreted</location>
    </subcellularLocation>
    <subcellularLocation>
        <location evidence="2">Nucleus</location>
    </subcellularLocation>
    <subcellularLocation>
        <location evidence="2">Cytoplasmic granule</location>
    </subcellularLocation>
    <subcellularLocation>
        <location evidence="19">Cell membrane</location>
    </subcellularLocation>
    <text evidence="2 19">Sumoylated form is predominant in the nucleus (PubMed:16443219). Stored in alpha granules in platelets (By similarity).</text>
</comment>
<comment type="tissue specificity">
    <text evidence="8 10 18 20 22">Mainly expressed in kidney, testis, liver, heart and brain (at protein level). Highly expressed in airway epithelium, interstitial cells and alveolar macrophages in the lung of mice overexpressing IL13. Expressed in the ovaries.</text>
</comment>
<comment type="developmental stage">
    <text evidence="6 7 13 15">In stage 9.5 dpc-15.5 dpc, widely expressed in the surface ectoderm and later in the germinal layer of the skin, the olfactory and otic placode and their derivatives and the lining of the oral cavity. In stages 14.5 dpc-17.5 expressed in ducts connected to epidermis, and in developing epidermal openings. Highly expressed in the early stages of the developing kidney, in the metanephric mesenchymal aggregates, prefusion skeletal muscle, cardiac myoblasts, and in visceral and vascular smooth muscle.</text>
</comment>
<comment type="induction">
    <text evidence="9 12 16 17 18 20 21">Expression decreased by hypoxia. Up-regulated by EWS-FLI1 transcription factor in tumor-derived cells. Up-regulated by IL13 overexpression in the lung via STAT6 and EGR1. Elevated expression induced by coxsackievirus B3 infection in immunodeficient mice. Overexpressed in the renal fibrosis. Expression in the lung is significantly increased after bleomycin treatment. Down-regulated by retinoic acid and gonadotropin.</text>
</comment>
<comment type="PTM">
    <text evidence="1">Proteolytic removal of the N-terminal CUB domain releasing the core domain is necessary for unmasking the receptor-binding epitopes of the core domain. Cleavage after basic residues in the hinge region (region connecting the CUB and growth factor domains) gives rise to the receptor-binding form. Cleaved by PLAT and PLG (By similarity).</text>
</comment>
<comment type="PTM">
    <text evidence="19">Sumoylated by SUMO1.</text>
</comment>
<comment type="PTM">
    <text evidence="1">N-glycosylated.</text>
</comment>
<comment type="disease">
    <text evidence="16">Involved in the development of myocarditis and subsequent fibrosis in the experimental model of coxsackievirus B3-induced chronic myocarditis.</text>
</comment>
<comment type="disruption phenotype">
    <text evidence="14 22">Perinatal lethality. Mice have feeding and respiratory difficulties due to a complete cleft of the secondary palate. However, they have reduction of renal fibrogenesis. Mice lacking both PDGFA and PDGFC develop a cleft face, subepidermal blistering, deficiency of renal cortex mesenchyme, spina bifida and skeletal and vascular defects.</text>
</comment>
<comment type="similarity">
    <text evidence="23">Belongs to the PDGF/VEGF growth factor family.</text>
</comment>
<reference key="1">
    <citation type="journal article" date="2000" name="Mech. Dev.">
        <title>The mouse Pdgfc gene: dynamic expression in embryonic tissues during organogenesis.</title>
        <authorList>
            <person name="Ding H."/>
            <person name="Wu X."/>
            <person name="Kim I."/>
            <person name="Tam P.P."/>
            <person name="Koh G.Y."/>
            <person name="Nagy A."/>
        </authorList>
    </citation>
    <scope>NUCLEOTIDE SEQUENCE [MRNA]</scope>
    <scope>DEVELOPMENTAL STAGE</scope>
    <source>
        <strain>Swiss Webster / NIH</strain>
    </source>
</reference>
<reference key="2">
    <citation type="submission" date="1999-01" db="EMBL/GenBank/DDBJ databases">
        <title>cDNA cloning of fallotein from mouse ovary.</title>
        <authorList>
            <person name="Tsai Y.-J."/>
            <person name="Lee R.K.-K."/>
            <person name="Chen Y.-H."/>
            <person name="Lin S.-P."/>
            <person name="Cheng W.T.-K."/>
        </authorList>
    </citation>
    <scope>NUCLEOTIDE SEQUENCE [MRNA]</scope>
    <source>
        <tissue>Ovary</tissue>
    </source>
</reference>
<reference key="3">
    <citation type="submission" date="2000-05" db="EMBL/GenBank/DDBJ databases">
        <title>Platelet-derived growth factor C (PDGF-C), a novel growth factor that binds to PDGF alpha receptor.</title>
        <authorList>
            <person name="Gao Z."/>
            <person name="Hart C."/>
            <person name="Piddington C."/>
            <person name="Sheppard P."/>
            <person name="Shoemaker K."/>
            <person name="Gilbertson D."/>
            <person name="West J."/>
            <person name="O'Hara P.J."/>
        </authorList>
    </citation>
    <scope>NUCLEOTIDE SEQUENCE [MRNA]</scope>
    <source>
        <strain>C57BL/6J</strain>
    </source>
</reference>
<reference key="4">
    <citation type="journal article" date="2005" name="Science">
        <title>The transcriptional landscape of the mammalian genome.</title>
        <authorList>
            <person name="Carninci P."/>
            <person name="Kasukawa T."/>
            <person name="Katayama S."/>
            <person name="Gough J."/>
            <person name="Frith M.C."/>
            <person name="Maeda N."/>
            <person name="Oyama R."/>
            <person name="Ravasi T."/>
            <person name="Lenhard B."/>
            <person name="Wells C."/>
            <person name="Kodzius R."/>
            <person name="Shimokawa K."/>
            <person name="Bajic V.B."/>
            <person name="Brenner S.E."/>
            <person name="Batalov S."/>
            <person name="Forrest A.R."/>
            <person name="Zavolan M."/>
            <person name="Davis M.J."/>
            <person name="Wilming L.G."/>
            <person name="Aidinis V."/>
            <person name="Allen J.E."/>
            <person name="Ambesi-Impiombato A."/>
            <person name="Apweiler R."/>
            <person name="Aturaliya R.N."/>
            <person name="Bailey T.L."/>
            <person name="Bansal M."/>
            <person name="Baxter L."/>
            <person name="Beisel K.W."/>
            <person name="Bersano T."/>
            <person name="Bono H."/>
            <person name="Chalk A.M."/>
            <person name="Chiu K.P."/>
            <person name="Choudhary V."/>
            <person name="Christoffels A."/>
            <person name="Clutterbuck D.R."/>
            <person name="Crowe M.L."/>
            <person name="Dalla E."/>
            <person name="Dalrymple B.P."/>
            <person name="de Bono B."/>
            <person name="Della Gatta G."/>
            <person name="di Bernardo D."/>
            <person name="Down T."/>
            <person name="Engstrom P."/>
            <person name="Fagiolini M."/>
            <person name="Faulkner G."/>
            <person name="Fletcher C.F."/>
            <person name="Fukushima T."/>
            <person name="Furuno M."/>
            <person name="Futaki S."/>
            <person name="Gariboldi M."/>
            <person name="Georgii-Hemming P."/>
            <person name="Gingeras T.R."/>
            <person name="Gojobori T."/>
            <person name="Green R.E."/>
            <person name="Gustincich S."/>
            <person name="Harbers M."/>
            <person name="Hayashi Y."/>
            <person name="Hensch T.K."/>
            <person name="Hirokawa N."/>
            <person name="Hill D."/>
            <person name="Huminiecki L."/>
            <person name="Iacono M."/>
            <person name="Ikeo K."/>
            <person name="Iwama A."/>
            <person name="Ishikawa T."/>
            <person name="Jakt M."/>
            <person name="Kanapin A."/>
            <person name="Katoh M."/>
            <person name="Kawasawa Y."/>
            <person name="Kelso J."/>
            <person name="Kitamura H."/>
            <person name="Kitano H."/>
            <person name="Kollias G."/>
            <person name="Krishnan S.P."/>
            <person name="Kruger A."/>
            <person name="Kummerfeld S.K."/>
            <person name="Kurochkin I.V."/>
            <person name="Lareau L.F."/>
            <person name="Lazarevic D."/>
            <person name="Lipovich L."/>
            <person name="Liu J."/>
            <person name="Liuni S."/>
            <person name="McWilliam S."/>
            <person name="Madan Babu M."/>
            <person name="Madera M."/>
            <person name="Marchionni L."/>
            <person name="Matsuda H."/>
            <person name="Matsuzawa S."/>
            <person name="Miki H."/>
            <person name="Mignone F."/>
            <person name="Miyake S."/>
            <person name="Morris K."/>
            <person name="Mottagui-Tabar S."/>
            <person name="Mulder N."/>
            <person name="Nakano N."/>
            <person name="Nakauchi H."/>
            <person name="Ng P."/>
            <person name="Nilsson R."/>
            <person name="Nishiguchi S."/>
            <person name="Nishikawa S."/>
            <person name="Nori F."/>
            <person name="Ohara O."/>
            <person name="Okazaki Y."/>
            <person name="Orlando V."/>
            <person name="Pang K.C."/>
            <person name="Pavan W.J."/>
            <person name="Pavesi G."/>
            <person name="Pesole G."/>
            <person name="Petrovsky N."/>
            <person name="Piazza S."/>
            <person name="Reed J."/>
            <person name="Reid J.F."/>
            <person name="Ring B.Z."/>
            <person name="Ringwald M."/>
            <person name="Rost B."/>
            <person name="Ruan Y."/>
            <person name="Salzberg S.L."/>
            <person name="Sandelin A."/>
            <person name="Schneider C."/>
            <person name="Schoenbach C."/>
            <person name="Sekiguchi K."/>
            <person name="Semple C.A."/>
            <person name="Seno S."/>
            <person name="Sessa L."/>
            <person name="Sheng Y."/>
            <person name="Shibata Y."/>
            <person name="Shimada H."/>
            <person name="Shimada K."/>
            <person name="Silva D."/>
            <person name="Sinclair B."/>
            <person name="Sperling S."/>
            <person name="Stupka E."/>
            <person name="Sugiura K."/>
            <person name="Sultana R."/>
            <person name="Takenaka Y."/>
            <person name="Taki K."/>
            <person name="Tammoja K."/>
            <person name="Tan S.L."/>
            <person name="Tang S."/>
            <person name="Taylor M.S."/>
            <person name="Tegner J."/>
            <person name="Teichmann S.A."/>
            <person name="Ueda H.R."/>
            <person name="van Nimwegen E."/>
            <person name="Verardo R."/>
            <person name="Wei C.L."/>
            <person name="Yagi K."/>
            <person name="Yamanishi H."/>
            <person name="Zabarovsky E."/>
            <person name="Zhu S."/>
            <person name="Zimmer A."/>
            <person name="Hide W."/>
            <person name="Bult C."/>
            <person name="Grimmond S.M."/>
            <person name="Teasdale R.D."/>
            <person name="Liu E.T."/>
            <person name="Brusic V."/>
            <person name="Quackenbush J."/>
            <person name="Wahlestedt C."/>
            <person name="Mattick J.S."/>
            <person name="Hume D.A."/>
            <person name="Kai C."/>
            <person name="Sasaki D."/>
            <person name="Tomaru Y."/>
            <person name="Fukuda S."/>
            <person name="Kanamori-Katayama M."/>
            <person name="Suzuki M."/>
            <person name="Aoki J."/>
            <person name="Arakawa T."/>
            <person name="Iida J."/>
            <person name="Imamura K."/>
            <person name="Itoh M."/>
            <person name="Kato T."/>
            <person name="Kawaji H."/>
            <person name="Kawagashira N."/>
            <person name="Kawashima T."/>
            <person name="Kojima M."/>
            <person name="Kondo S."/>
            <person name="Konno H."/>
            <person name="Nakano K."/>
            <person name="Ninomiya N."/>
            <person name="Nishio T."/>
            <person name="Okada M."/>
            <person name="Plessy C."/>
            <person name="Shibata K."/>
            <person name="Shiraki T."/>
            <person name="Suzuki S."/>
            <person name="Tagami M."/>
            <person name="Waki K."/>
            <person name="Watahiki A."/>
            <person name="Okamura-Oho Y."/>
            <person name="Suzuki H."/>
            <person name="Kawai J."/>
            <person name="Hayashizaki Y."/>
        </authorList>
    </citation>
    <scope>NUCLEOTIDE SEQUENCE [LARGE SCALE MRNA]</scope>
    <source>
        <strain>C57BL/6J</strain>
        <tissue>Cecum</tissue>
        <tissue>Cerebellum</tissue>
        <tissue>Head</tissue>
    </source>
</reference>
<reference key="5">
    <citation type="journal article" date="2004" name="Genome Res.">
        <title>The status, quality, and expansion of the NIH full-length cDNA project: the Mammalian Gene Collection (MGC).</title>
        <authorList>
            <consortium name="The MGC Project Team"/>
        </authorList>
    </citation>
    <scope>NUCLEOTIDE SEQUENCE [LARGE SCALE MRNA]</scope>
    <source>
        <strain>Czech II</strain>
        <strain>FVB/N</strain>
        <tissue>Mammary tumor</tissue>
    </source>
</reference>
<reference key="6">
    <citation type="journal article" date="2000" name="Nat. Cell Biol.">
        <title>PDGF-C is a new protease-activated ligand for the PDGF alpha-receptor.</title>
        <authorList>
            <person name="Li X."/>
            <person name="Ponten A."/>
            <person name="Aase K."/>
            <person name="Karlsson L."/>
            <person name="Abramsson A."/>
            <person name="Uutela M."/>
            <person name="Backstrom G."/>
            <person name="Hellstrom M."/>
            <person name="Bostrom H."/>
            <person name="Li H."/>
            <person name="Soriano P."/>
            <person name="Betsholtz C."/>
            <person name="Heldin C.H."/>
            <person name="Alitalo K."/>
            <person name="Ostman A."/>
            <person name="Eriksson U."/>
        </authorList>
    </citation>
    <scope>FUNCTION</scope>
    <scope>SUBUNIT</scope>
    <scope>DEVELOPMENTAL STAGE</scope>
</reference>
<reference key="7">
    <citation type="journal article" date="2001" name="J. Biol. Chem.">
        <title>Platelet-derived growth factor C (PDGF-C), a novel growth factor that binds to PDGF alpha and beta receptor.</title>
        <authorList>
            <person name="Gilbertson D.G."/>
            <person name="Duff M.E."/>
            <person name="West J.W."/>
            <person name="Kelly J.D."/>
            <person name="Sheppard P.O."/>
            <person name="Hofstrand P.D."/>
            <person name="Gao Z."/>
            <person name="Shoemaker K."/>
            <person name="Bukowski T.R."/>
            <person name="Moore M."/>
            <person name="Feldhaus A.L."/>
            <person name="Humes J.M."/>
            <person name="Palmer T.E."/>
            <person name="Hart C.E."/>
        </authorList>
    </citation>
    <scope>FUNCTION</scope>
    <scope>SUBUNIT</scope>
    <scope>TISSUE SPECIFICITY</scope>
</reference>
<reference key="8">
    <citation type="journal article" date="2001" name="Oncogene">
        <title>PDGF-C is an EWS/FLI induced transforming growth factor in Ewing family tumors.</title>
        <authorList>
            <person name="Zwerner J.P."/>
            <person name="May W.A."/>
        </authorList>
    </citation>
    <scope>INDUCTION</scope>
</reference>
<reference key="9">
    <citation type="journal article" date="2002" name="Mech. Dev.">
        <title>Expression analysis of PDGF-C in adult and developing mouse tissues.</title>
        <authorList>
            <person name="Aase K."/>
            <person name="Abramsson A."/>
            <person name="Karlsson L."/>
            <person name="Betsholtz C."/>
            <person name="Eriksson U."/>
        </authorList>
    </citation>
    <scope>TISSUE SPECIFICITY</scope>
</reference>
<reference key="10">
    <citation type="journal article" date="2003" name="Am. J. Pathol.">
        <title>Transgenic overexpression of platelet-derived growth factor-C in the mouse heart induces cardiac fibrosis, hypertrophy, and dilated cardiomyopathy.</title>
        <authorList>
            <person name="Ponten A."/>
            <person name="Li X."/>
            <person name="Thoren P."/>
            <person name="Aase K."/>
            <person name="Sjoblom T."/>
            <person name="Ostman A."/>
            <person name="Eriksson U."/>
        </authorList>
    </citation>
    <scope>FUNCTION</scope>
</reference>
<reference key="11">
    <citation type="journal article" date="2004" name="Am. J. Physiol.">
        <title>Modulation of PDGF-C and PDGF-D expression during bleomycin-induced lung fibrosis.</title>
        <authorList>
            <person name="Zhuo Y."/>
            <person name="Zhang J."/>
            <person name="Laboy M."/>
            <person name="Lasky J.A."/>
        </authorList>
    </citation>
    <scope>FUNCTION</scope>
    <scope>INDUCTION BY BLEOMYCIN</scope>
</reference>
<reference key="12">
    <citation type="journal article" date="2004" name="Arterioscler. Thromb. Vasc. Biol.">
        <title>PDGF C is a selective alpha platelet-derived growth factor receptor agonist that is highly expressed in platelet alpha granules and vascular smooth muscle.</title>
        <authorList>
            <person name="Fang L."/>
            <person name="Yan Y."/>
            <person name="Komuves L.G."/>
            <person name="Yonkovich S."/>
            <person name="Sullivan C.M."/>
            <person name="Stringer B."/>
            <person name="Galbraith S."/>
            <person name="Lokker N.A."/>
            <person name="Hwang S.S."/>
            <person name="Nurden P."/>
            <person name="Phillips D.R."/>
            <person name="Giese N.A."/>
        </authorList>
    </citation>
    <scope>DEVELOPMENTAL STAGE</scope>
</reference>
<reference key="13">
    <citation type="journal article" date="2004" name="Cytokine Growth Factor Rev.">
        <title>PDGF signaling in cells and mice.</title>
        <authorList>
            <person name="Tallquist M."/>
            <person name="Kazlauskas A."/>
        </authorList>
    </citation>
    <scope>REVIEW</scope>
</reference>
<reference key="14">
    <citation type="journal article" date="2004" name="EMBO J.">
        <title>Tissue plasminogen activator is a potent activator of PDGF-CC.</title>
        <authorList>
            <person name="Fredriksson L."/>
            <person name="Li H."/>
            <person name="Fieber C."/>
            <person name="Li X."/>
            <person name="Eriksson U."/>
        </authorList>
    </citation>
    <scope>FUNCTION</scope>
    <scope>SUBCELLULAR LOCATION</scope>
    <scope>DEVELOPMENTAL STAGE</scope>
    <scope>ACTIVATION BY PROTEOLYTIC CLEAVAGE</scope>
</reference>
<reference key="15">
    <citation type="journal article" date="2004" name="Nat. Genet.">
        <title>A specific requirement for PDGF-C in palate formation and PDGFR-alpha signaling.</title>
        <authorList>
            <person name="Ding H."/>
            <person name="Wu X."/>
            <person name="Bostrom H."/>
            <person name="Kim I."/>
            <person name="Wong N."/>
            <person name="Tsoi B."/>
            <person name="O'Rourke M."/>
            <person name="Koh G.Y."/>
            <person name="Soriano P."/>
            <person name="Betsholtz C."/>
            <person name="Hart T.C."/>
            <person name="Marazita M.L."/>
            <person name="Field L.L."/>
            <person name="Tam P.P."/>
            <person name="Nagy A."/>
        </authorList>
    </citation>
    <scope>DISRUPTION PHENOTYPE</scope>
    <scope>FUNCTION</scope>
</reference>
<reference key="16">
    <citation type="journal article" date="2005" name="Eur. Heart J.">
        <title>Linkage between elevated PDGF-C expression and myocardial fibrogenesis in coxsackievirus B3-induced chronic myocarditis.</title>
        <authorList>
            <person name="Yang D."/>
            <person name="Qiu D."/>
        </authorList>
    </citation>
    <scope>FUNCTION</scope>
    <scope>INDUCTION BY COXSACKIEVIRUS B3 INFECTION</scope>
    <scope>DISEASE</scope>
</reference>
<reference key="17">
    <citation type="journal article" date="2005" name="J. Biol. Chem.">
        <title>Structural requirements for activation of latent platelet-derived growth factor CC by tissue plasminogen activator.</title>
        <authorList>
            <person name="Fredriksson L."/>
            <person name="Ehnman M."/>
            <person name="Fieber C."/>
            <person name="Eriksson U."/>
        </authorList>
    </citation>
    <scope>INDUCTION</scope>
</reference>
<reference key="18">
    <citation type="journal article" date="2006" name="Birth Defects Res. B Dev. Reprod. Toxicol.">
        <title>PDGF-C controls proliferation and is down-regulated by retinoic acid in mouse embryonic palatal mesenchymal cells.</title>
        <authorList>
            <person name="Han J."/>
            <person name="Xiao Y."/>
            <person name="Lin J."/>
            <person name="Li Y."/>
        </authorList>
    </citation>
    <scope>INDUCTION BY RETINOIC ACID</scope>
</reference>
<reference key="19">
    <citation type="journal article" date="2006" name="Carcinogenesis">
        <title>Aberrant expression of PDGF ligands and receptors in the tumor prone ovary of follitropin receptor knockout (FORKO) mouse.</title>
        <authorList>
            <person name="Chen X."/>
            <person name="Aravindakshan J."/>
            <person name="Yang Y."/>
            <person name="Tiwari-Pandey R."/>
            <person name="Sairam M.R."/>
        </authorList>
    </citation>
    <scope>TISSUE SPECIFICITY</scope>
    <scope>INDUCTION BY GONADOTROPIN</scope>
</reference>
<reference key="20">
    <citation type="journal article" date="2006" name="Exp. Cell Res.">
        <title>Nuclear localisation of endogenous SUMO-1-modified PDGF-C in human thyroid tissue and cell lines.</title>
        <authorList>
            <person name="Reigstad L.J."/>
            <person name="Martinez A."/>
            <person name="Varhaug J.E."/>
            <person name="Lillehaug J.R."/>
        </authorList>
    </citation>
    <scope>SUBCELLULAR LOCATION</scope>
    <scope>SUMOYLATION</scope>
</reference>
<reference key="21">
    <citation type="journal article" date="2006" name="J. Immunol.">
        <title>Opposing actions of Stat1 and Stat6 on IL-13-induced up-regulation of early growth response-1 and platelet-derived growth factor ligands in pulmonary fibroblasts.</title>
        <authorList>
            <person name="Ingram J.L."/>
            <person name="Antao-Menezes A."/>
            <person name="Mangum J.B."/>
            <person name="Lyght O."/>
            <person name="Lee P.J."/>
            <person name="Elias J.A."/>
            <person name="Bonner J.C."/>
        </authorList>
    </citation>
    <scope>TISSUE SPECIFICITY</scope>
    <scope>INDUCTION BY IL13</scope>
</reference>
<reference key="22">
    <citation type="journal article" date="2008" name="J. Am. Soc. Nephrol.">
        <title>PDGF-C is a proinflammatory cytokine that mediates renal interstitial fibrosis.</title>
        <authorList>
            <person name="Eitner F."/>
            <person name="Bucher E."/>
            <person name="van Roeyen C."/>
            <person name="Kunter U."/>
            <person name="Rong S."/>
            <person name="Seikrit C."/>
            <person name="Villa L."/>
            <person name="Boor P."/>
            <person name="Fredriksson L."/>
            <person name="Backstrom G."/>
            <person name="Eriksson U."/>
            <person name="Ostman A."/>
            <person name="Floege J."/>
            <person name="Ostendorf T."/>
        </authorList>
    </citation>
    <scope>FUNCTION</scope>
    <scope>TISSUE SPECIFICITY</scope>
    <scope>DISRUPTION PHENOTYPE</scope>
</reference>
<accession>Q8CI19</accession>
<accession>Q99JM4</accession>
<accession>Q9JHV8</accession>
<accession>Q9QY71</accession>
<dbReference type="EMBL" id="AF286725">
    <property type="protein sequence ID" value="AAF91483.1"/>
    <property type="molecule type" value="mRNA"/>
</dbReference>
<dbReference type="EMBL" id="AF117608">
    <property type="protein sequence ID" value="AAF22516.1"/>
    <property type="molecule type" value="mRNA"/>
</dbReference>
<dbReference type="EMBL" id="AF266467">
    <property type="protein sequence ID" value="AAK58566.1"/>
    <property type="molecule type" value="mRNA"/>
</dbReference>
<dbReference type="EMBL" id="AK033734">
    <property type="protein sequence ID" value="BAC28455.1"/>
    <property type="molecule type" value="mRNA"/>
</dbReference>
<dbReference type="EMBL" id="AK042767">
    <property type="protein sequence ID" value="BAC31358.1"/>
    <property type="molecule type" value="mRNA"/>
</dbReference>
<dbReference type="EMBL" id="AK052947">
    <property type="protein sequence ID" value="BAC35216.1"/>
    <property type="molecule type" value="mRNA"/>
</dbReference>
<dbReference type="EMBL" id="BC006027">
    <property type="protein sequence ID" value="AAH06027.1"/>
    <property type="molecule type" value="mRNA"/>
</dbReference>
<dbReference type="EMBL" id="BC037696">
    <property type="protein sequence ID" value="AAH37696.1"/>
    <property type="molecule type" value="mRNA"/>
</dbReference>
<dbReference type="CCDS" id="CCDS17425.1"/>
<dbReference type="RefSeq" id="NP_064355.1">
    <property type="nucleotide sequence ID" value="NM_019971.3"/>
</dbReference>
<dbReference type="SMR" id="Q8CI19"/>
<dbReference type="ComplexPortal" id="CPX-2909">
    <property type="entry name" value="Platelet-derived growth factor CC complex"/>
</dbReference>
<dbReference type="ComplexPortal" id="CPX-2912">
    <property type="entry name" value="PDGF receptor alpha - PDGF-CC complex"/>
</dbReference>
<dbReference type="ComplexPortal" id="CPX-2913">
    <property type="entry name" value="PDGF receptor alpha-beta - PDGF-CC complex"/>
</dbReference>
<dbReference type="ComplexPortal" id="CPX-2914">
    <property type="entry name" value="PDGF receptor beta - PDGF-CC complex"/>
</dbReference>
<dbReference type="FunCoup" id="Q8CI19">
    <property type="interactions" value="1217"/>
</dbReference>
<dbReference type="STRING" id="10090.ENSMUSP00000029652"/>
<dbReference type="GlyCosmos" id="Q8CI19">
    <property type="glycosylation" value="2 sites, No reported glycans"/>
</dbReference>
<dbReference type="GlyGen" id="Q8CI19">
    <property type="glycosylation" value="3 sites, 2 N-linked glycans (2 sites)"/>
</dbReference>
<dbReference type="PhosphoSitePlus" id="Q8CI19"/>
<dbReference type="PaxDb" id="10090-ENSMUSP00000029652"/>
<dbReference type="PeptideAtlas" id="Q8CI19"/>
<dbReference type="ProteomicsDB" id="301781"/>
<dbReference type="Antibodypedia" id="28096">
    <property type="antibodies" value="354 antibodies from 29 providers"/>
</dbReference>
<dbReference type="DNASU" id="54635"/>
<dbReference type="Ensembl" id="ENSMUST00000029652.4">
    <property type="protein sequence ID" value="ENSMUSP00000029652.3"/>
    <property type="gene ID" value="ENSMUSG00000028019.10"/>
</dbReference>
<dbReference type="GeneID" id="54635"/>
<dbReference type="KEGG" id="mmu:54635"/>
<dbReference type="UCSC" id="uc008poi.1">
    <property type="organism name" value="mouse"/>
</dbReference>
<dbReference type="AGR" id="MGI:1859631"/>
<dbReference type="CTD" id="56034"/>
<dbReference type="MGI" id="MGI:1859631">
    <property type="gene designation" value="Pdgfc"/>
</dbReference>
<dbReference type="VEuPathDB" id="HostDB:ENSMUSG00000028019"/>
<dbReference type="eggNOG" id="ENOG502QUUR">
    <property type="taxonomic scope" value="Eukaryota"/>
</dbReference>
<dbReference type="GeneTree" id="ENSGT00940000158645"/>
<dbReference type="HOGENOM" id="CLU_037859_0_0_1"/>
<dbReference type="InParanoid" id="Q8CI19"/>
<dbReference type="OMA" id="MLIQLTF"/>
<dbReference type="OrthoDB" id="8641091at2759"/>
<dbReference type="PhylomeDB" id="Q8CI19"/>
<dbReference type="TreeFam" id="TF332130"/>
<dbReference type="Reactome" id="R-MMU-186797">
    <property type="pathway name" value="Signaling by PDGF"/>
</dbReference>
<dbReference type="BioGRID-ORCS" id="54635">
    <property type="hits" value="1 hit in 77 CRISPR screens"/>
</dbReference>
<dbReference type="ChiTaRS" id="Pdgfc">
    <property type="organism name" value="mouse"/>
</dbReference>
<dbReference type="PRO" id="PR:Q8CI19"/>
<dbReference type="Proteomes" id="UP000000589">
    <property type="component" value="Chromosome 3"/>
</dbReference>
<dbReference type="RNAct" id="Q8CI19">
    <property type="molecule type" value="protein"/>
</dbReference>
<dbReference type="Bgee" id="ENSMUSG00000028019">
    <property type="expression patterns" value="Expressed in indifferent gonad and 286 other cell types or tissues"/>
</dbReference>
<dbReference type="ExpressionAtlas" id="Q8CI19">
    <property type="expression patterns" value="baseline and differential"/>
</dbReference>
<dbReference type="GO" id="GO:0009986">
    <property type="term" value="C:cell surface"/>
    <property type="evidence" value="ECO:0007669"/>
    <property type="project" value="Ensembl"/>
</dbReference>
<dbReference type="GO" id="GO:0005829">
    <property type="term" value="C:cytosol"/>
    <property type="evidence" value="ECO:0007669"/>
    <property type="project" value="UniProtKB-SubCell"/>
</dbReference>
<dbReference type="GO" id="GO:0005576">
    <property type="term" value="C:extracellular region"/>
    <property type="evidence" value="ECO:0000314"/>
    <property type="project" value="MGI"/>
</dbReference>
<dbReference type="GO" id="GO:0005615">
    <property type="term" value="C:extracellular space"/>
    <property type="evidence" value="ECO:0007669"/>
    <property type="project" value="Ensembl"/>
</dbReference>
<dbReference type="GO" id="GO:0005634">
    <property type="term" value="C:nucleus"/>
    <property type="evidence" value="ECO:0007669"/>
    <property type="project" value="UniProtKB-SubCell"/>
</dbReference>
<dbReference type="GO" id="GO:0005886">
    <property type="term" value="C:plasma membrane"/>
    <property type="evidence" value="ECO:0007669"/>
    <property type="project" value="UniProtKB-SubCell"/>
</dbReference>
<dbReference type="GO" id="GO:0008083">
    <property type="term" value="F:growth factor activity"/>
    <property type="evidence" value="ECO:0007669"/>
    <property type="project" value="UniProtKB-KW"/>
</dbReference>
<dbReference type="GO" id="GO:0005161">
    <property type="term" value="F:platelet-derived growth factor receptor binding"/>
    <property type="evidence" value="ECO:0000314"/>
    <property type="project" value="MGI"/>
</dbReference>
<dbReference type="GO" id="GO:0042803">
    <property type="term" value="F:protein homodimerization activity"/>
    <property type="evidence" value="ECO:0007669"/>
    <property type="project" value="Ensembl"/>
</dbReference>
<dbReference type="GO" id="GO:0009887">
    <property type="term" value="P:animal organ morphogenesis"/>
    <property type="evidence" value="ECO:0000315"/>
    <property type="project" value="MGI"/>
</dbReference>
<dbReference type="GO" id="GO:0060348">
    <property type="term" value="P:bone development"/>
    <property type="evidence" value="ECO:0000316"/>
    <property type="project" value="MGI"/>
</dbReference>
<dbReference type="GO" id="GO:0071230">
    <property type="term" value="P:cellular response to amino acid stimulus"/>
    <property type="evidence" value="ECO:0000314"/>
    <property type="project" value="MGI"/>
</dbReference>
<dbReference type="GO" id="GO:0048565">
    <property type="term" value="P:digestive tract development"/>
    <property type="evidence" value="ECO:0000316"/>
    <property type="project" value="MGI"/>
</dbReference>
<dbReference type="GO" id="GO:0048144">
    <property type="term" value="P:fibroblast proliferation"/>
    <property type="evidence" value="ECO:0000314"/>
    <property type="project" value="MGI"/>
</dbReference>
<dbReference type="GO" id="GO:0048008">
    <property type="term" value="P:platelet-derived growth factor receptor signaling pathway"/>
    <property type="evidence" value="ECO:0000314"/>
    <property type="project" value="MGI"/>
</dbReference>
<dbReference type="GO" id="GO:0051781">
    <property type="term" value="P:positive regulation of cell division"/>
    <property type="evidence" value="ECO:0007669"/>
    <property type="project" value="UniProtKB-KW"/>
</dbReference>
<dbReference type="GO" id="GO:0008284">
    <property type="term" value="P:positive regulation of cell population proliferation"/>
    <property type="evidence" value="ECO:0000314"/>
    <property type="project" value="MGI"/>
</dbReference>
<dbReference type="GO" id="GO:0120162">
    <property type="term" value="P:positive regulation of cold-induced thermogenesis"/>
    <property type="evidence" value="ECO:0000315"/>
    <property type="project" value="YuBioLab"/>
</dbReference>
<dbReference type="GO" id="GO:0048146">
    <property type="term" value="P:positive regulation of fibroblast proliferation"/>
    <property type="evidence" value="ECO:0000314"/>
    <property type="project" value="MGI"/>
</dbReference>
<dbReference type="CDD" id="cd00041">
    <property type="entry name" value="CUB"/>
    <property type="match status" value="1"/>
</dbReference>
<dbReference type="CDD" id="cd00135">
    <property type="entry name" value="PDGF"/>
    <property type="match status" value="1"/>
</dbReference>
<dbReference type="FunFam" id="2.10.90.10:FF:000010">
    <property type="entry name" value="Platelet derived growth factor C"/>
    <property type="match status" value="1"/>
</dbReference>
<dbReference type="FunFam" id="2.60.120.290:FF:000017">
    <property type="entry name" value="Platelet derived growth factor C"/>
    <property type="match status" value="1"/>
</dbReference>
<dbReference type="Gene3D" id="2.10.90.10">
    <property type="entry name" value="Cystine-knot cytokines"/>
    <property type="match status" value="1"/>
</dbReference>
<dbReference type="Gene3D" id="2.60.120.290">
    <property type="entry name" value="Spermadhesin, CUB domain"/>
    <property type="match status" value="1"/>
</dbReference>
<dbReference type="InterPro" id="IPR000859">
    <property type="entry name" value="CUB_dom"/>
</dbReference>
<dbReference type="InterPro" id="IPR029034">
    <property type="entry name" value="Cystine-knot_cytokine"/>
</dbReference>
<dbReference type="InterPro" id="IPR000072">
    <property type="entry name" value="PDGF/VEGF_dom"/>
</dbReference>
<dbReference type="InterPro" id="IPR035914">
    <property type="entry name" value="Sperma_CUB_dom_sf"/>
</dbReference>
<dbReference type="PANTHER" id="PTHR11633">
    <property type="entry name" value="PLATELET-DERIVED GROWTH FACTOR"/>
    <property type="match status" value="1"/>
</dbReference>
<dbReference type="PANTHER" id="PTHR11633:SF5">
    <property type="entry name" value="PLATELET-DERIVED GROWTH FACTOR C"/>
    <property type="match status" value="1"/>
</dbReference>
<dbReference type="Pfam" id="PF00431">
    <property type="entry name" value="CUB"/>
    <property type="match status" value="1"/>
</dbReference>
<dbReference type="Pfam" id="PF00341">
    <property type="entry name" value="PDGF"/>
    <property type="match status" value="1"/>
</dbReference>
<dbReference type="SMART" id="SM00042">
    <property type="entry name" value="CUB"/>
    <property type="match status" value="1"/>
</dbReference>
<dbReference type="SMART" id="SM00141">
    <property type="entry name" value="PDGF"/>
    <property type="match status" value="1"/>
</dbReference>
<dbReference type="SUPFAM" id="SSF57501">
    <property type="entry name" value="Cystine-knot cytokines"/>
    <property type="match status" value="1"/>
</dbReference>
<dbReference type="SUPFAM" id="SSF49854">
    <property type="entry name" value="Spermadhesin, CUB domain"/>
    <property type="match status" value="1"/>
</dbReference>
<dbReference type="PROSITE" id="PS01180">
    <property type="entry name" value="CUB"/>
    <property type="match status" value="1"/>
</dbReference>
<dbReference type="PROSITE" id="PS50278">
    <property type="entry name" value="PDGF_2"/>
    <property type="match status" value="1"/>
</dbReference>
<organism>
    <name type="scientific">Mus musculus</name>
    <name type="common">Mouse</name>
    <dbReference type="NCBI Taxonomy" id="10090"/>
    <lineage>
        <taxon>Eukaryota</taxon>
        <taxon>Metazoa</taxon>
        <taxon>Chordata</taxon>
        <taxon>Craniata</taxon>
        <taxon>Vertebrata</taxon>
        <taxon>Euteleostomi</taxon>
        <taxon>Mammalia</taxon>
        <taxon>Eutheria</taxon>
        <taxon>Euarchontoglires</taxon>
        <taxon>Glires</taxon>
        <taxon>Rodentia</taxon>
        <taxon>Myomorpha</taxon>
        <taxon>Muroidea</taxon>
        <taxon>Muridae</taxon>
        <taxon>Murinae</taxon>
        <taxon>Mus</taxon>
        <taxon>Mus</taxon>
    </lineage>
</organism>
<protein>
    <recommendedName>
        <fullName>Platelet-derived growth factor C</fullName>
        <shortName>PDGF-C</shortName>
    </recommendedName>
    <alternativeName>
        <fullName>Fallotein</fullName>
    </alternativeName>
    <alternativeName>
        <fullName>Spinal cord-derived growth factor</fullName>
        <shortName>SCDGF</shortName>
    </alternativeName>
    <alternativeName>
        <fullName>VEGF-E</fullName>
    </alternativeName>
    <component>
        <recommendedName>
            <fullName>Platelet-derived growth factor C, latent form</fullName>
            <shortName>PDGFC latent form</shortName>
        </recommendedName>
    </component>
    <component>
        <recommendedName>
            <fullName>Platelet-derived growth factor C, receptor-binding form</fullName>
            <shortName>PDGFC receptor-binding form</shortName>
        </recommendedName>
    </component>
</protein>
<gene>
    <name type="primary">Pdgfc</name>
    <name type="synonym">Scdgf</name>
</gene>